<protein>
    <recommendedName>
        <fullName evidence="1">Crossover junction endodeoxyribonuclease RuvC</fullName>
        <ecNumber evidence="1">3.1.21.10</ecNumber>
    </recommendedName>
    <alternativeName>
        <fullName evidence="1">Holliday junction nuclease RuvC</fullName>
    </alternativeName>
    <alternativeName>
        <fullName evidence="1">Holliday junction resolvase RuvC</fullName>
    </alternativeName>
</protein>
<dbReference type="EC" id="3.1.21.10" evidence="1"/>
<dbReference type="EMBL" id="AE009951">
    <property type="protein sequence ID" value="AAL94420.1"/>
    <property type="molecule type" value="Genomic_DNA"/>
</dbReference>
<dbReference type="RefSeq" id="NP_603121.1">
    <property type="nucleotide sequence ID" value="NC_003454.1"/>
</dbReference>
<dbReference type="RefSeq" id="WP_005902123.1">
    <property type="nucleotide sequence ID" value="NZ_OZ209243.1"/>
</dbReference>
<dbReference type="SMR" id="Q8RGS0"/>
<dbReference type="STRING" id="190304.FN0214"/>
<dbReference type="PaxDb" id="190304-FN0214"/>
<dbReference type="EnsemblBacteria" id="AAL94420">
    <property type="protein sequence ID" value="AAL94420"/>
    <property type="gene ID" value="FN0214"/>
</dbReference>
<dbReference type="GeneID" id="79783232"/>
<dbReference type="KEGG" id="fnu:FN0214"/>
<dbReference type="PATRIC" id="fig|190304.8.peg.795"/>
<dbReference type="eggNOG" id="COG0817">
    <property type="taxonomic scope" value="Bacteria"/>
</dbReference>
<dbReference type="HOGENOM" id="CLU_091257_3_1_0"/>
<dbReference type="InParanoid" id="Q8RGS0"/>
<dbReference type="BioCyc" id="FNUC190304:G1FZS-816-MONOMER"/>
<dbReference type="Proteomes" id="UP000002521">
    <property type="component" value="Chromosome"/>
</dbReference>
<dbReference type="GO" id="GO:0005737">
    <property type="term" value="C:cytoplasm"/>
    <property type="evidence" value="ECO:0007669"/>
    <property type="project" value="UniProtKB-SubCell"/>
</dbReference>
<dbReference type="GO" id="GO:0048476">
    <property type="term" value="C:Holliday junction resolvase complex"/>
    <property type="evidence" value="ECO:0007669"/>
    <property type="project" value="UniProtKB-UniRule"/>
</dbReference>
<dbReference type="GO" id="GO:0008821">
    <property type="term" value="F:crossover junction DNA endonuclease activity"/>
    <property type="evidence" value="ECO:0007669"/>
    <property type="project" value="UniProtKB-UniRule"/>
</dbReference>
<dbReference type="GO" id="GO:0003677">
    <property type="term" value="F:DNA binding"/>
    <property type="evidence" value="ECO:0007669"/>
    <property type="project" value="UniProtKB-KW"/>
</dbReference>
<dbReference type="GO" id="GO:0000287">
    <property type="term" value="F:magnesium ion binding"/>
    <property type="evidence" value="ECO:0007669"/>
    <property type="project" value="UniProtKB-UniRule"/>
</dbReference>
<dbReference type="GO" id="GO:0006310">
    <property type="term" value="P:DNA recombination"/>
    <property type="evidence" value="ECO:0007669"/>
    <property type="project" value="UniProtKB-UniRule"/>
</dbReference>
<dbReference type="GO" id="GO:0006281">
    <property type="term" value="P:DNA repair"/>
    <property type="evidence" value="ECO:0007669"/>
    <property type="project" value="UniProtKB-UniRule"/>
</dbReference>
<dbReference type="CDD" id="cd16962">
    <property type="entry name" value="RuvC"/>
    <property type="match status" value="1"/>
</dbReference>
<dbReference type="FunFam" id="3.30.420.10:FF:000002">
    <property type="entry name" value="Crossover junction endodeoxyribonuclease RuvC"/>
    <property type="match status" value="1"/>
</dbReference>
<dbReference type="Gene3D" id="3.30.420.10">
    <property type="entry name" value="Ribonuclease H-like superfamily/Ribonuclease H"/>
    <property type="match status" value="1"/>
</dbReference>
<dbReference type="HAMAP" id="MF_00034">
    <property type="entry name" value="RuvC"/>
    <property type="match status" value="1"/>
</dbReference>
<dbReference type="InterPro" id="IPR012337">
    <property type="entry name" value="RNaseH-like_sf"/>
</dbReference>
<dbReference type="InterPro" id="IPR036397">
    <property type="entry name" value="RNaseH_sf"/>
</dbReference>
<dbReference type="InterPro" id="IPR020563">
    <property type="entry name" value="X-over_junc_endoDNase_Mg_BS"/>
</dbReference>
<dbReference type="InterPro" id="IPR002176">
    <property type="entry name" value="X-over_junc_endoDNase_RuvC"/>
</dbReference>
<dbReference type="NCBIfam" id="NF000711">
    <property type="entry name" value="PRK00039.2-1"/>
    <property type="match status" value="1"/>
</dbReference>
<dbReference type="NCBIfam" id="TIGR00228">
    <property type="entry name" value="ruvC"/>
    <property type="match status" value="1"/>
</dbReference>
<dbReference type="PANTHER" id="PTHR30194">
    <property type="entry name" value="CROSSOVER JUNCTION ENDODEOXYRIBONUCLEASE RUVC"/>
    <property type="match status" value="1"/>
</dbReference>
<dbReference type="PANTHER" id="PTHR30194:SF3">
    <property type="entry name" value="CROSSOVER JUNCTION ENDODEOXYRIBONUCLEASE RUVC"/>
    <property type="match status" value="1"/>
</dbReference>
<dbReference type="Pfam" id="PF02075">
    <property type="entry name" value="RuvC"/>
    <property type="match status" value="1"/>
</dbReference>
<dbReference type="PRINTS" id="PR00696">
    <property type="entry name" value="RSOLVASERUVC"/>
</dbReference>
<dbReference type="SUPFAM" id="SSF53098">
    <property type="entry name" value="Ribonuclease H-like"/>
    <property type="match status" value="1"/>
</dbReference>
<dbReference type="PROSITE" id="PS01321">
    <property type="entry name" value="RUVC"/>
    <property type="match status" value="1"/>
</dbReference>
<name>RUVC_FUSNN</name>
<gene>
    <name evidence="1" type="primary">ruvC</name>
    <name type="ordered locus">FN0214</name>
</gene>
<keyword id="KW-0963">Cytoplasm</keyword>
<keyword id="KW-0227">DNA damage</keyword>
<keyword id="KW-0233">DNA recombination</keyword>
<keyword id="KW-0234">DNA repair</keyword>
<keyword id="KW-0238">DNA-binding</keyword>
<keyword id="KW-0255">Endonuclease</keyword>
<keyword id="KW-0378">Hydrolase</keyword>
<keyword id="KW-0460">Magnesium</keyword>
<keyword id="KW-0479">Metal-binding</keyword>
<keyword id="KW-0540">Nuclease</keyword>
<keyword id="KW-1185">Reference proteome</keyword>
<organism>
    <name type="scientific">Fusobacterium nucleatum subsp. nucleatum (strain ATCC 25586 / DSM 15643 / BCRC 10681 / CIP 101130 / JCM 8532 / KCTC 2640 / LMG 13131 / VPI 4355)</name>
    <dbReference type="NCBI Taxonomy" id="190304"/>
    <lineage>
        <taxon>Bacteria</taxon>
        <taxon>Fusobacteriati</taxon>
        <taxon>Fusobacteriota</taxon>
        <taxon>Fusobacteriia</taxon>
        <taxon>Fusobacteriales</taxon>
        <taxon>Fusobacteriaceae</taxon>
        <taxon>Fusobacterium</taxon>
    </lineage>
</organism>
<evidence type="ECO:0000255" key="1">
    <source>
        <dbReference type="HAMAP-Rule" id="MF_00034"/>
    </source>
</evidence>
<comment type="function">
    <text evidence="1">The RuvA-RuvB-RuvC complex processes Holliday junction (HJ) DNA during genetic recombination and DNA repair. Endonuclease that resolves HJ intermediates. Cleaves cruciform DNA by making single-stranded nicks across the HJ at symmetrical positions within the homologous arms, yielding a 5'-phosphate and a 3'-hydroxyl group; requires a central core of homology in the junction. The consensus cleavage sequence is 5'-(A/T)TT(C/G)-3'. Cleavage occurs on the 3'-side of the TT dinucleotide at the point of strand exchange. HJ branch migration catalyzed by RuvA-RuvB allows RuvC to scan DNA until it finds its consensus sequence, where it cleaves and resolves the cruciform DNA.</text>
</comment>
<comment type="catalytic activity">
    <reaction evidence="1">
        <text>Endonucleolytic cleavage at a junction such as a reciprocal single-stranded crossover between two homologous DNA duplexes (Holliday junction).</text>
        <dbReference type="EC" id="3.1.21.10"/>
    </reaction>
</comment>
<comment type="cofactor">
    <cofactor evidence="1">
        <name>Mg(2+)</name>
        <dbReference type="ChEBI" id="CHEBI:18420"/>
    </cofactor>
    <text evidence="1">Binds 2 Mg(2+) ion per subunit.</text>
</comment>
<comment type="subunit">
    <text evidence="1">Homodimer which binds Holliday junction (HJ) DNA. The HJ becomes 2-fold symmetrical on binding to RuvC with unstacked arms; it has a different conformation from HJ DNA in complex with RuvA. In the full resolvosome a probable DNA-RuvA(4)-RuvB(12)-RuvC(2) complex forms which resolves the HJ.</text>
</comment>
<comment type="subcellular location">
    <subcellularLocation>
        <location evidence="1">Cytoplasm</location>
    </subcellularLocation>
</comment>
<comment type="similarity">
    <text evidence="1">Belongs to the RuvC family.</text>
</comment>
<proteinExistence type="inferred from homology"/>
<sequence>MRVIGIDPGTAIVGYGIIDYDKNKYSIVDYGVVLTSKDLSTEERLEIVYDEIDKILKKYKPEFMAIEDLFYFKNNKTVISVAQARGVILLAGKQNNIAMTSYTPLQVKIGITGYGKAEKKQIQQMVQKFLGLSEIPKPDDAADALAICITHINSLGSKLSFGRTNNLNKIVVPSGTNKISLEEYKNLLKK</sequence>
<feature type="chain" id="PRO_0000183099" description="Crossover junction endodeoxyribonuclease RuvC">
    <location>
        <begin position="1"/>
        <end position="190"/>
    </location>
</feature>
<feature type="active site" evidence="1">
    <location>
        <position position="7"/>
    </location>
</feature>
<feature type="active site" evidence="1">
    <location>
        <position position="67"/>
    </location>
</feature>
<feature type="active site" evidence="1">
    <location>
        <position position="140"/>
    </location>
</feature>
<feature type="binding site" evidence="1">
    <location>
        <position position="7"/>
    </location>
    <ligand>
        <name>Mg(2+)</name>
        <dbReference type="ChEBI" id="CHEBI:18420"/>
        <label>1</label>
    </ligand>
</feature>
<feature type="binding site" evidence="1">
    <location>
        <position position="67"/>
    </location>
    <ligand>
        <name>Mg(2+)</name>
        <dbReference type="ChEBI" id="CHEBI:18420"/>
        <label>2</label>
    </ligand>
</feature>
<feature type="binding site" evidence="1">
    <location>
        <position position="140"/>
    </location>
    <ligand>
        <name>Mg(2+)</name>
        <dbReference type="ChEBI" id="CHEBI:18420"/>
        <label>1</label>
    </ligand>
</feature>
<reference key="1">
    <citation type="journal article" date="2002" name="J. Bacteriol.">
        <title>Genome sequence and analysis of the oral bacterium Fusobacterium nucleatum strain ATCC 25586.</title>
        <authorList>
            <person name="Kapatral V."/>
            <person name="Anderson I."/>
            <person name="Ivanova N."/>
            <person name="Reznik G."/>
            <person name="Los T."/>
            <person name="Lykidis A."/>
            <person name="Bhattacharyya A."/>
            <person name="Bartman A."/>
            <person name="Gardner W."/>
            <person name="Grechkin G."/>
            <person name="Zhu L."/>
            <person name="Vasieva O."/>
            <person name="Chu L."/>
            <person name="Kogan Y."/>
            <person name="Chaga O."/>
            <person name="Goltsman E."/>
            <person name="Bernal A."/>
            <person name="Larsen N."/>
            <person name="D'Souza M."/>
            <person name="Walunas T."/>
            <person name="Pusch G."/>
            <person name="Haselkorn R."/>
            <person name="Fonstein M."/>
            <person name="Kyrpides N.C."/>
            <person name="Overbeek R."/>
        </authorList>
    </citation>
    <scope>NUCLEOTIDE SEQUENCE [LARGE SCALE GENOMIC DNA]</scope>
    <source>
        <strain>ATCC 25586 / DSM 15643 / BCRC 10681 / CIP 101130 / JCM 8532 / KCTC 2640 / LMG 13131 / VPI 4355</strain>
    </source>
</reference>
<accession>Q8RGS0</accession>